<sequence length="373" mass="40382">MTAEIQQPPSQPPAQSSPMSAATDKHGGQPSVMESANCATKTKKTNAGIRRPEKPPYSYIALIVMAIQSSPTKRLTLSEIYQFLQSRFPFFRGSYQGWKNSVRHNLSLNECFIKLPKGLGRPGKGHYWTIDPASEFMFEEGSFRRRPRGFRRKCQALKPMYSMMNGLGFNHIPETYSFQGASGTIACPPNSLSLDSGIGMMNGHLPSNVDGMGLSGHPVSHIAANGGHSYMGSCTGSSGGDYSHHDSGSPLLGGGGVMEPHSVYSSPASAWAPSASTPYIKQQPLSPCNSAANPLSSSLSSHSLDQSYLHQNSHNTASELQGIPRYHSQSPSMNDRKEFVFSFNAMASSSMHSGSGSYYHQQVGYQDIKPCVM</sequence>
<gene>
    <name evidence="6" type="primary">foxf1</name>
    <name type="ORF">TNeu093i16.1</name>
</gene>
<comment type="function">
    <text evidence="1">Probable transcription factor. Required for smooth muscle (visceral mesoderm) differentiation during gut development. Also required for normal proliferation of the lateral plate mesoderm. Acts as a downstream mediator of bmp4-signaling (By similarity).</text>
</comment>
<comment type="subcellular location">
    <subcellularLocation>
        <location evidence="2 5">Nucleus</location>
    </subcellularLocation>
</comment>
<accession>Q28BS5</accession>
<evidence type="ECO:0000250" key="1">
    <source>
        <dbReference type="UniProtKB" id="Q9W707"/>
    </source>
</evidence>
<evidence type="ECO:0000255" key="2"/>
<evidence type="ECO:0000255" key="3">
    <source>
        <dbReference type="PROSITE-ProRule" id="PRU00089"/>
    </source>
</evidence>
<evidence type="ECO:0000256" key="4">
    <source>
        <dbReference type="SAM" id="MobiDB-lite"/>
    </source>
</evidence>
<evidence type="ECO:0000305" key="5"/>
<evidence type="ECO:0000312" key="6">
    <source>
        <dbReference type="EMBL" id="CAJ83103.1"/>
    </source>
</evidence>
<dbReference type="EMBL" id="CR942666">
    <property type="protein sequence ID" value="CAJ83103.1"/>
    <property type="molecule type" value="mRNA"/>
</dbReference>
<dbReference type="RefSeq" id="NP_001039226.1">
    <property type="nucleotide sequence ID" value="NM_001045761.1"/>
</dbReference>
<dbReference type="SMR" id="Q28BS5"/>
<dbReference type="FunCoup" id="Q28BS5">
    <property type="interactions" value="600"/>
</dbReference>
<dbReference type="PaxDb" id="8364-ENSXETP00000007706"/>
<dbReference type="DNASU" id="734087"/>
<dbReference type="GeneID" id="734087"/>
<dbReference type="KEGG" id="xtr:734087"/>
<dbReference type="AGR" id="Xenbase:XB-GENE-478922"/>
<dbReference type="CTD" id="2294"/>
<dbReference type="Xenbase" id="XB-GENE-478922">
    <property type="gene designation" value="foxf1"/>
</dbReference>
<dbReference type="eggNOG" id="KOG2294">
    <property type="taxonomic scope" value="Eukaryota"/>
</dbReference>
<dbReference type="InParanoid" id="Q28BS5"/>
<dbReference type="OMA" id="KPHGQTA"/>
<dbReference type="OrthoDB" id="5954824at2759"/>
<dbReference type="Proteomes" id="UP000008143">
    <property type="component" value="Chromosome 4"/>
</dbReference>
<dbReference type="Bgee" id="ENSXETG00000003565">
    <property type="expression patterns" value="Expressed in anterior neural ridge (Xenopus) and 27 other cell types or tissues"/>
</dbReference>
<dbReference type="GO" id="GO:0005634">
    <property type="term" value="C:nucleus"/>
    <property type="evidence" value="ECO:0007669"/>
    <property type="project" value="UniProtKB-SubCell"/>
</dbReference>
<dbReference type="GO" id="GO:0003677">
    <property type="term" value="F:DNA binding"/>
    <property type="evidence" value="ECO:0000250"/>
    <property type="project" value="UniProtKB"/>
</dbReference>
<dbReference type="GO" id="GO:0003700">
    <property type="term" value="F:DNA-binding transcription factor activity"/>
    <property type="evidence" value="ECO:0007669"/>
    <property type="project" value="InterPro"/>
</dbReference>
<dbReference type="GO" id="GO:0043565">
    <property type="term" value="F:sequence-specific DNA binding"/>
    <property type="evidence" value="ECO:0007669"/>
    <property type="project" value="InterPro"/>
</dbReference>
<dbReference type="GO" id="GO:0030509">
    <property type="term" value="P:BMP signaling pathway"/>
    <property type="evidence" value="ECO:0000250"/>
    <property type="project" value="UniProtKB"/>
</dbReference>
<dbReference type="GO" id="GO:0030154">
    <property type="term" value="P:cell differentiation"/>
    <property type="evidence" value="ECO:0007669"/>
    <property type="project" value="UniProtKB-KW"/>
</dbReference>
<dbReference type="GO" id="GO:0048566">
    <property type="term" value="P:embryonic digestive tract development"/>
    <property type="evidence" value="ECO:0000250"/>
    <property type="project" value="UniProtKB"/>
</dbReference>
<dbReference type="GO" id="GO:0045893">
    <property type="term" value="P:positive regulation of DNA-templated transcription"/>
    <property type="evidence" value="ECO:0000250"/>
    <property type="project" value="UniProtKB"/>
</dbReference>
<dbReference type="GO" id="GO:0048745">
    <property type="term" value="P:smooth muscle tissue development"/>
    <property type="evidence" value="ECO:0000250"/>
    <property type="project" value="UniProtKB"/>
</dbReference>
<dbReference type="GO" id="GO:0002040">
    <property type="term" value="P:sprouting angiogenesis"/>
    <property type="evidence" value="ECO:0007669"/>
    <property type="project" value="Ensembl"/>
</dbReference>
<dbReference type="CDD" id="cd20049">
    <property type="entry name" value="FH_FOXF1"/>
    <property type="match status" value="1"/>
</dbReference>
<dbReference type="FunFam" id="1.10.10.10:FF:000071">
    <property type="entry name" value="Forkhead box F1"/>
    <property type="match status" value="1"/>
</dbReference>
<dbReference type="Gene3D" id="1.10.10.10">
    <property type="entry name" value="Winged helix-like DNA-binding domain superfamily/Winged helix DNA-binding domain"/>
    <property type="match status" value="1"/>
</dbReference>
<dbReference type="InterPro" id="IPR001766">
    <property type="entry name" value="Fork_head_dom"/>
</dbReference>
<dbReference type="InterPro" id="IPR051770">
    <property type="entry name" value="Forkhead_box_regulator"/>
</dbReference>
<dbReference type="InterPro" id="IPR018122">
    <property type="entry name" value="TF_fork_head_CS_1"/>
</dbReference>
<dbReference type="InterPro" id="IPR030456">
    <property type="entry name" value="TF_fork_head_CS_2"/>
</dbReference>
<dbReference type="InterPro" id="IPR036388">
    <property type="entry name" value="WH-like_DNA-bd_sf"/>
</dbReference>
<dbReference type="InterPro" id="IPR036390">
    <property type="entry name" value="WH_DNA-bd_sf"/>
</dbReference>
<dbReference type="PANTHER" id="PTHR46262">
    <property type="entry name" value="FORKHEAD BOX PROTEIN BINIOU"/>
    <property type="match status" value="1"/>
</dbReference>
<dbReference type="PANTHER" id="PTHR46262:SF1">
    <property type="entry name" value="FORKHEAD BOX PROTEIN F1"/>
    <property type="match status" value="1"/>
</dbReference>
<dbReference type="Pfam" id="PF00250">
    <property type="entry name" value="Forkhead"/>
    <property type="match status" value="1"/>
</dbReference>
<dbReference type="PRINTS" id="PR00053">
    <property type="entry name" value="FORKHEAD"/>
</dbReference>
<dbReference type="SMART" id="SM00339">
    <property type="entry name" value="FH"/>
    <property type="match status" value="1"/>
</dbReference>
<dbReference type="SUPFAM" id="SSF46785">
    <property type="entry name" value="Winged helix' DNA-binding domain"/>
    <property type="match status" value="1"/>
</dbReference>
<dbReference type="PROSITE" id="PS00657">
    <property type="entry name" value="FORK_HEAD_1"/>
    <property type="match status" value="1"/>
</dbReference>
<dbReference type="PROSITE" id="PS00658">
    <property type="entry name" value="FORK_HEAD_2"/>
    <property type="match status" value="1"/>
</dbReference>
<dbReference type="PROSITE" id="PS50039">
    <property type="entry name" value="FORK_HEAD_3"/>
    <property type="match status" value="1"/>
</dbReference>
<keyword id="KW-0217">Developmental protein</keyword>
<keyword id="KW-0221">Differentiation</keyword>
<keyword id="KW-0238">DNA-binding</keyword>
<keyword id="KW-0539">Nucleus</keyword>
<keyword id="KW-1185">Reference proteome</keyword>
<keyword id="KW-0804">Transcription</keyword>
<keyword id="KW-0805">Transcription regulation</keyword>
<feature type="chain" id="PRO_0000259402" description="Forkhead box protein F1">
    <location>
        <begin position="1"/>
        <end position="373"/>
    </location>
</feature>
<feature type="DNA-binding region" description="Fork-head" evidence="3">
    <location>
        <begin position="54"/>
        <end position="148"/>
    </location>
</feature>
<feature type="region of interest" description="Disordered" evidence="4">
    <location>
        <begin position="1"/>
        <end position="51"/>
    </location>
</feature>
<feature type="region of interest" description="Disordered" evidence="4">
    <location>
        <begin position="236"/>
        <end position="255"/>
    </location>
</feature>
<feature type="region of interest" description="Disordered" evidence="4">
    <location>
        <begin position="283"/>
        <end position="306"/>
    </location>
</feature>
<feature type="compositionally biased region" description="Low complexity" evidence="4">
    <location>
        <begin position="13"/>
        <end position="22"/>
    </location>
</feature>
<feature type="compositionally biased region" description="Low complexity" evidence="4">
    <location>
        <begin position="286"/>
        <end position="306"/>
    </location>
</feature>
<proteinExistence type="evidence at transcript level"/>
<reference evidence="6" key="1">
    <citation type="submission" date="2006-06" db="EMBL/GenBank/DDBJ databases">
        <authorList>
            <consortium name="Sanger Xenopus tropicalis EST/cDNA project"/>
        </authorList>
    </citation>
    <scope>NUCLEOTIDE SEQUENCE [LARGE SCALE MRNA]</scope>
    <source>
        <tissue evidence="6">Neurula</tissue>
    </source>
</reference>
<organism>
    <name type="scientific">Xenopus tropicalis</name>
    <name type="common">Western clawed frog</name>
    <name type="synonym">Silurana tropicalis</name>
    <dbReference type="NCBI Taxonomy" id="8364"/>
    <lineage>
        <taxon>Eukaryota</taxon>
        <taxon>Metazoa</taxon>
        <taxon>Chordata</taxon>
        <taxon>Craniata</taxon>
        <taxon>Vertebrata</taxon>
        <taxon>Euteleostomi</taxon>
        <taxon>Amphibia</taxon>
        <taxon>Batrachia</taxon>
        <taxon>Anura</taxon>
        <taxon>Pipoidea</taxon>
        <taxon>Pipidae</taxon>
        <taxon>Xenopodinae</taxon>
        <taxon>Xenopus</taxon>
        <taxon>Silurana</taxon>
    </lineage>
</organism>
<name>FOXF1_XENTR</name>
<protein>
    <recommendedName>
        <fullName>Forkhead box protein F1</fullName>
        <shortName>FoxF1</shortName>
    </recommendedName>
</protein>